<feature type="chain" id="PRO_0000454313" description="Deoxyuridine 5'-triphosphate nucleotidohydrolase">
    <location>
        <begin position="1"/>
        <end position="162"/>
    </location>
</feature>
<feature type="binding site" evidence="1">
    <location>
        <begin position="83"/>
        <end position="85"/>
    </location>
    <ligand>
        <name>dUTP</name>
        <dbReference type="ChEBI" id="CHEBI:61555"/>
    </ligand>
</feature>
<feature type="binding site" evidence="1">
    <location>
        <begin position="97"/>
        <end position="103"/>
    </location>
    <ligand>
        <name>dUTP</name>
        <dbReference type="ChEBI" id="CHEBI:61555"/>
    </ligand>
</feature>
<feature type="binding site" evidence="1">
    <location>
        <position position="108"/>
    </location>
    <ligand>
        <name>dUTP</name>
        <dbReference type="ChEBI" id="CHEBI:61555"/>
    </ligand>
</feature>
<feature type="binding site" evidence="1">
    <location>
        <position position="151"/>
    </location>
    <ligand>
        <name>dUTP</name>
        <dbReference type="ChEBI" id="CHEBI:61555"/>
    </ligand>
</feature>
<feature type="binding site" evidence="1">
    <location>
        <begin position="156"/>
        <end position="157"/>
    </location>
    <ligand>
        <name>dUTP</name>
        <dbReference type="ChEBI" id="CHEBI:61555"/>
    </ligand>
</feature>
<feature type="modified residue" description="Phosphoserine" evidence="1">
    <location>
        <position position="11"/>
    </location>
</feature>
<feature type="splice variant" id="VSP_061339" description="In isoform 2.">
    <original>MPCSE</original>
    <variation>MPLLSVLLRARLQAALLRGRALGSARSRSCRGSRGAPAGSARA</variation>
    <location>
        <begin position="1"/>
        <end position="5"/>
    </location>
</feature>
<feature type="sequence conflict" description="In Ref. 1; AAF74514." evidence="4" ref="1">
    <original>A</original>
    <variation>T</variation>
    <location>
        <position position="35"/>
    </location>
</feature>
<evidence type="ECO:0000250" key="1">
    <source>
        <dbReference type="UniProtKB" id="P33316"/>
    </source>
</evidence>
<evidence type="ECO:0000250" key="2">
    <source>
        <dbReference type="UniProtKB" id="P70583"/>
    </source>
</evidence>
<evidence type="ECO:0000269" key="3">
    <source>
    </source>
</evidence>
<evidence type="ECO:0000305" key="4"/>
<organism>
    <name type="scientific">Mus musculus</name>
    <name type="common">Mouse</name>
    <dbReference type="NCBI Taxonomy" id="10090"/>
    <lineage>
        <taxon>Eukaryota</taxon>
        <taxon>Metazoa</taxon>
        <taxon>Chordata</taxon>
        <taxon>Craniata</taxon>
        <taxon>Vertebrata</taxon>
        <taxon>Euteleostomi</taxon>
        <taxon>Mammalia</taxon>
        <taxon>Eutheria</taxon>
        <taxon>Euarchontoglires</taxon>
        <taxon>Glires</taxon>
        <taxon>Rodentia</taxon>
        <taxon>Myomorpha</taxon>
        <taxon>Muroidea</taxon>
        <taxon>Muridae</taxon>
        <taxon>Murinae</taxon>
        <taxon>Mus</taxon>
        <taxon>Mus</taxon>
    </lineage>
</organism>
<reference key="1">
    <citation type="submission" date="1998-09" db="EMBL/GenBank/DDBJ databases">
        <title>Mouse dUTPase cloning and genomic structural analysis.</title>
        <authorList>
            <person name="Kan L."/>
            <person name="Varanasi U."/>
            <person name="Zhu Y."/>
            <person name="Qi C."/>
            <person name="Reddy J.K."/>
        </authorList>
    </citation>
    <scope>NUCLEOTIDE SEQUENCE [MRNA] (ISOFORM 1)</scope>
</reference>
<reference key="2">
    <citation type="journal article" date="2005" name="Science">
        <title>The transcriptional landscape of the mammalian genome.</title>
        <authorList>
            <person name="Carninci P."/>
            <person name="Kasukawa T."/>
            <person name="Katayama S."/>
            <person name="Gough J."/>
            <person name="Frith M.C."/>
            <person name="Maeda N."/>
            <person name="Oyama R."/>
            <person name="Ravasi T."/>
            <person name="Lenhard B."/>
            <person name="Wells C."/>
            <person name="Kodzius R."/>
            <person name="Shimokawa K."/>
            <person name="Bajic V.B."/>
            <person name="Brenner S.E."/>
            <person name="Batalov S."/>
            <person name="Forrest A.R."/>
            <person name="Zavolan M."/>
            <person name="Davis M.J."/>
            <person name="Wilming L.G."/>
            <person name="Aidinis V."/>
            <person name="Allen J.E."/>
            <person name="Ambesi-Impiombato A."/>
            <person name="Apweiler R."/>
            <person name="Aturaliya R.N."/>
            <person name="Bailey T.L."/>
            <person name="Bansal M."/>
            <person name="Baxter L."/>
            <person name="Beisel K.W."/>
            <person name="Bersano T."/>
            <person name="Bono H."/>
            <person name="Chalk A.M."/>
            <person name="Chiu K.P."/>
            <person name="Choudhary V."/>
            <person name="Christoffels A."/>
            <person name="Clutterbuck D.R."/>
            <person name="Crowe M.L."/>
            <person name="Dalla E."/>
            <person name="Dalrymple B.P."/>
            <person name="de Bono B."/>
            <person name="Della Gatta G."/>
            <person name="di Bernardo D."/>
            <person name="Down T."/>
            <person name="Engstrom P."/>
            <person name="Fagiolini M."/>
            <person name="Faulkner G."/>
            <person name="Fletcher C.F."/>
            <person name="Fukushima T."/>
            <person name="Furuno M."/>
            <person name="Futaki S."/>
            <person name="Gariboldi M."/>
            <person name="Georgii-Hemming P."/>
            <person name="Gingeras T.R."/>
            <person name="Gojobori T."/>
            <person name="Green R.E."/>
            <person name="Gustincich S."/>
            <person name="Harbers M."/>
            <person name="Hayashi Y."/>
            <person name="Hensch T.K."/>
            <person name="Hirokawa N."/>
            <person name="Hill D."/>
            <person name="Huminiecki L."/>
            <person name="Iacono M."/>
            <person name="Ikeo K."/>
            <person name="Iwama A."/>
            <person name="Ishikawa T."/>
            <person name="Jakt M."/>
            <person name="Kanapin A."/>
            <person name="Katoh M."/>
            <person name="Kawasawa Y."/>
            <person name="Kelso J."/>
            <person name="Kitamura H."/>
            <person name="Kitano H."/>
            <person name="Kollias G."/>
            <person name="Krishnan S.P."/>
            <person name="Kruger A."/>
            <person name="Kummerfeld S.K."/>
            <person name="Kurochkin I.V."/>
            <person name="Lareau L.F."/>
            <person name="Lazarevic D."/>
            <person name="Lipovich L."/>
            <person name="Liu J."/>
            <person name="Liuni S."/>
            <person name="McWilliam S."/>
            <person name="Madan Babu M."/>
            <person name="Madera M."/>
            <person name="Marchionni L."/>
            <person name="Matsuda H."/>
            <person name="Matsuzawa S."/>
            <person name="Miki H."/>
            <person name="Mignone F."/>
            <person name="Miyake S."/>
            <person name="Morris K."/>
            <person name="Mottagui-Tabar S."/>
            <person name="Mulder N."/>
            <person name="Nakano N."/>
            <person name="Nakauchi H."/>
            <person name="Ng P."/>
            <person name="Nilsson R."/>
            <person name="Nishiguchi S."/>
            <person name="Nishikawa S."/>
            <person name="Nori F."/>
            <person name="Ohara O."/>
            <person name="Okazaki Y."/>
            <person name="Orlando V."/>
            <person name="Pang K.C."/>
            <person name="Pavan W.J."/>
            <person name="Pavesi G."/>
            <person name="Pesole G."/>
            <person name="Petrovsky N."/>
            <person name="Piazza S."/>
            <person name="Reed J."/>
            <person name="Reid J.F."/>
            <person name="Ring B.Z."/>
            <person name="Ringwald M."/>
            <person name="Rost B."/>
            <person name="Ruan Y."/>
            <person name="Salzberg S.L."/>
            <person name="Sandelin A."/>
            <person name="Schneider C."/>
            <person name="Schoenbach C."/>
            <person name="Sekiguchi K."/>
            <person name="Semple C.A."/>
            <person name="Seno S."/>
            <person name="Sessa L."/>
            <person name="Sheng Y."/>
            <person name="Shibata Y."/>
            <person name="Shimada H."/>
            <person name="Shimada K."/>
            <person name="Silva D."/>
            <person name="Sinclair B."/>
            <person name="Sperling S."/>
            <person name="Stupka E."/>
            <person name="Sugiura K."/>
            <person name="Sultana R."/>
            <person name="Takenaka Y."/>
            <person name="Taki K."/>
            <person name="Tammoja K."/>
            <person name="Tan S.L."/>
            <person name="Tang S."/>
            <person name="Taylor M.S."/>
            <person name="Tegner J."/>
            <person name="Teichmann S.A."/>
            <person name="Ueda H.R."/>
            <person name="van Nimwegen E."/>
            <person name="Verardo R."/>
            <person name="Wei C.L."/>
            <person name="Yagi K."/>
            <person name="Yamanishi H."/>
            <person name="Zabarovsky E."/>
            <person name="Zhu S."/>
            <person name="Zimmer A."/>
            <person name="Hide W."/>
            <person name="Bult C."/>
            <person name="Grimmond S.M."/>
            <person name="Teasdale R.D."/>
            <person name="Liu E.T."/>
            <person name="Brusic V."/>
            <person name="Quackenbush J."/>
            <person name="Wahlestedt C."/>
            <person name="Mattick J.S."/>
            <person name="Hume D.A."/>
            <person name="Kai C."/>
            <person name="Sasaki D."/>
            <person name="Tomaru Y."/>
            <person name="Fukuda S."/>
            <person name="Kanamori-Katayama M."/>
            <person name="Suzuki M."/>
            <person name="Aoki J."/>
            <person name="Arakawa T."/>
            <person name="Iida J."/>
            <person name="Imamura K."/>
            <person name="Itoh M."/>
            <person name="Kato T."/>
            <person name="Kawaji H."/>
            <person name="Kawagashira N."/>
            <person name="Kawashima T."/>
            <person name="Kojima M."/>
            <person name="Kondo S."/>
            <person name="Konno H."/>
            <person name="Nakano K."/>
            <person name="Ninomiya N."/>
            <person name="Nishio T."/>
            <person name="Okada M."/>
            <person name="Plessy C."/>
            <person name="Shibata K."/>
            <person name="Shiraki T."/>
            <person name="Suzuki S."/>
            <person name="Tagami M."/>
            <person name="Waki K."/>
            <person name="Watahiki A."/>
            <person name="Okamura-Oho Y."/>
            <person name="Suzuki H."/>
            <person name="Kawai J."/>
            <person name="Hayashizaki Y."/>
        </authorList>
    </citation>
    <scope>NUCLEOTIDE SEQUENCE [LARGE SCALE MRNA] (ISOFORMS 1 AND 2)</scope>
    <source>
        <strain>C57BL/6J</strain>
        <tissue>Bone marrow</tissue>
        <tissue>Muellerian duct</tissue>
        <tissue>Ovary</tissue>
        <tissue>Spleen</tissue>
        <tissue>Uterus</tissue>
    </source>
</reference>
<reference key="3">
    <citation type="journal article" date="2009" name="PLoS Biol.">
        <title>Lineage-specific biology revealed by a finished genome assembly of the mouse.</title>
        <authorList>
            <person name="Church D.M."/>
            <person name="Goodstadt L."/>
            <person name="Hillier L.W."/>
            <person name="Zody M.C."/>
            <person name="Goldstein S."/>
            <person name="She X."/>
            <person name="Bult C.J."/>
            <person name="Agarwala R."/>
            <person name="Cherry J.L."/>
            <person name="DiCuccio M."/>
            <person name="Hlavina W."/>
            <person name="Kapustin Y."/>
            <person name="Meric P."/>
            <person name="Maglott D."/>
            <person name="Birtle Z."/>
            <person name="Marques A.C."/>
            <person name="Graves T."/>
            <person name="Zhou S."/>
            <person name="Teague B."/>
            <person name="Potamousis K."/>
            <person name="Churas C."/>
            <person name="Place M."/>
            <person name="Herschleb J."/>
            <person name="Runnheim R."/>
            <person name="Forrest D."/>
            <person name="Amos-Landgraf J."/>
            <person name="Schwartz D.C."/>
            <person name="Cheng Z."/>
            <person name="Lindblad-Toh K."/>
            <person name="Eichler E.E."/>
            <person name="Ponting C.P."/>
        </authorList>
    </citation>
    <scope>NUCLEOTIDE SEQUENCE [LARGE SCALE GENOMIC DNA]</scope>
    <source>
        <strain>C57BL/6J</strain>
    </source>
</reference>
<reference key="4">
    <citation type="journal article" date="2004" name="Genome Res.">
        <title>The status, quality, and expansion of the NIH full-length cDNA project: the Mammalian Gene Collection (MGC).</title>
        <authorList>
            <consortium name="The MGC Project Team"/>
        </authorList>
    </citation>
    <scope>NUCLEOTIDE SEQUENCE [LARGE SCALE MRNA] (ISOFORMS 1 AND 2)</scope>
    <source>
        <strain>FVB/N</strain>
        <strain>FVB/N-3</strain>
        <tissue>Mammary tumor</tissue>
        <tissue>Salivary gland</tissue>
    </source>
</reference>
<reference key="5">
    <citation type="journal article" date="2010" name="Cell">
        <title>A tissue-specific atlas of mouse protein phosphorylation and expression.</title>
        <authorList>
            <person name="Huttlin E.L."/>
            <person name="Jedrychowski M.P."/>
            <person name="Elias J.E."/>
            <person name="Goswami T."/>
            <person name="Rad R."/>
            <person name="Beausoleil S.A."/>
            <person name="Villen J."/>
            <person name="Haas W."/>
            <person name="Sowa M.E."/>
            <person name="Gygi S.P."/>
        </authorList>
    </citation>
    <scope>IDENTIFICATION BY MASS SPECTROMETRY [LARGE SCALE ANALYSIS]</scope>
</reference>
<reference key="6">
    <citation type="journal article" date="2019" name="Biomolecules">
        <title>CRISPR/Cas9-Mediated Knock-Out of dUTPase in Mice Leads to Early Embryonic Lethality.</title>
        <authorList>
            <person name="Palinkas H.L."/>
            <person name="Racz G.A."/>
            <person name="Gal Z."/>
            <person name="Hoffmann O.I."/>
            <person name="Tihanyi G."/>
            <person name="Rona G."/>
            <person name="Gocza E."/>
            <person name="Hiripi L."/>
            <person name="Vertessy B.G."/>
        </authorList>
    </citation>
    <scope>FUNCTION</scope>
    <scope>DISRUPTION PHENOTYPE</scope>
</reference>
<gene>
    <name type="primary">Dut</name>
    <name type="synonym">Dutp</name>
</gene>
<protein>
    <recommendedName>
        <fullName>Deoxyuridine 5'-triphosphate nucleotidohydrolase</fullName>
        <shortName>dUTPase</shortName>
        <ecNumber evidence="1">3.6.1.23</ecNumber>
    </recommendedName>
</protein>
<keyword id="KW-0025">Alternative splicing</keyword>
<keyword id="KW-0378">Hydrolase</keyword>
<keyword id="KW-0460">Magnesium</keyword>
<keyword id="KW-0479">Metal-binding</keyword>
<keyword id="KW-0546">Nucleotide metabolism</keyword>
<keyword id="KW-0539">Nucleus</keyword>
<keyword id="KW-0597">Phosphoprotein</keyword>
<keyword id="KW-1185">Reference proteome</keyword>
<keyword id="KW-0809">Transit peptide</keyword>
<proteinExistence type="evidence at protein level"/>
<dbReference type="EC" id="3.6.1.23" evidence="1"/>
<dbReference type="EMBL" id="AF091101">
    <property type="protein sequence ID" value="AAF74514.1"/>
    <property type="molecule type" value="mRNA"/>
</dbReference>
<dbReference type="EMBL" id="AK003076">
    <property type="protein sequence ID" value="BAB22551.1"/>
    <property type="molecule type" value="mRNA"/>
</dbReference>
<dbReference type="EMBL" id="AK011407">
    <property type="protein sequence ID" value="BAB27599.1"/>
    <property type="molecule type" value="mRNA"/>
</dbReference>
<dbReference type="EMBL" id="AK077244">
    <property type="protein sequence ID" value="BAC36706.1"/>
    <property type="molecule type" value="mRNA"/>
</dbReference>
<dbReference type="EMBL" id="AK152459">
    <property type="protein sequence ID" value="BAE31237.1"/>
    <property type="molecule type" value="mRNA"/>
</dbReference>
<dbReference type="EMBL" id="AK153285">
    <property type="protein sequence ID" value="BAE31868.1"/>
    <property type="molecule type" value="mRNA"/>
</dbReference>
<dbReference type="EMBL" id="AK135438">
    <property type="protein sequence ID" value="BAE22532.1"/>
    <property type="molecule type" value="mRNA"/>
</dbReference>
<dbReference type="EMBL" id="GL456092">
    <property type="status" value="NOT_ANNOTATED_CDS"/>
    <property type="molecule type" value="Genomic_DNA"/>
</dbReference>
<dbReference type="EMBL" id="BC053693">
    <property type="protein sequence ID" value="AAH53693.1"/>
    <property type="molecule type" value="mRNA"/>
</dbReference>
<dbReference type="EMBL" id="BC019979">
    <property type="protein sequence ID" value="AAH19979.1"/>
    <property type="molecule type" value="mRNA"/>
</dbReference>
<dbReference type="CCDS" id="CCDS16675.1">
    <molecule id="Q9CQ43-1"/>
</dbReference>
<dbReference type="CCDS" id="CCDS50695.1">
    <molecule id="Q9CQ43-2"/>
</dbReference>
<dbReference type="RefSeq" id="NP_001153118.1">
    <molecule id="Q9CQ43-2"/>
    <property type="nucleotide sequence ID" value="NM_001159646.1"/>
</dbReference>
<dbReference type="RefSeq" id="NP_076084.2">
    <molecule id="Q9CQ43-1"/>
    <property type="nucleotide sequence ID" value="NM_023595.6"/>
</dbReference>
<dbReference type="SMR" id="Q9CQ43"/>
<dbReference type="FunCoup" id="Q9CQ43">
    <property type="interactions" value="3714"/>
</dbReference>
<dbReference type="IntAct" id="Q9CQ43">
    <property type="interactions" value="4"/>
</dbReference>
<dbReference type="STRING" id="10090.ENSMUSP00000080767"/>
<dbReference type="GlyGen" id="Q9CQ43">
    <property type="glycosylation" value="1 site, 1 O-linked glycan (1 site)"/>
</dbReference>
<dbReference type="iPTMnet" id="Q9CQ43"/>
<dbReference type="PhosphoSitePlus" id="Q9CQ43"/>
<dbReference type="REPRODUCTION-2DPAGE" id="IPI00467266"/>
<dbReference type="jPOST" id="Q9CQ43"/>
<dbReference type="PaxDb" id="10090-ENSMUSP00000080767"/>
<dbReference type="PeptideAtlas" id="Q9CQ43"/>
<dbReference type="ProteomicsDB" id="340884"/>
<dbReference type="ProteomicsDB" id="343269"/>
<dbReference type="Antibodypedia" id="24524">
    <property type="antibodies" value="389 antibodies from 31 providers"/>
</dbReference>
<dbReference type="DNASU" id="110074"/>
<dbReference type="Ensembl" id="ENSMUST00000051605.9">
    <molecule id="Q9CQ43-1"/>
    <property type="protein sequence ID" value="ENSMUSP00000057854.9"/>
    <property type="gene ID" value="ENSMUSG00000027203.16"/>
</dbReference>
<dbReference type="Ensembl" id="ENSMUST00000082122.14">
    <molecule id="Q9CQ43-2"/>
    <property type="protein sequence ID" value="ENSMUSP00000080767.8"/>
    <property type="gene ID" value="ENSMUSG00000027203.16"/>
</dbReference>
<dbReference type="GeneID" id="110074"/>
<dbReference type="KEGG" id="mmu:110074"/>
<dbReference type="UCSC" id="uc008mck.1">
    <property type="organism name" value="mouse"/>
</dbReference>
<dbReference type="UCSC" id="uc008mcl.2">
    <molecule id="Q9CQ43-1"/>
    <property type="organism name" value="mouse"/>
</dbReference>
<dbReference type="AGR" id="MGI:1346051"/>
<dbReference type="CTD" id="1854"/>
<dbReference type="MGI" id="MGI:1346051">
    <property type="gene designation" value="Dut"/>
</dbReference>
<dbReference type="VEuPathDB" id="HostDB:ENSMUSG00000027203"/>
<dbReference type="eggNOG" id="KOG3370">
    <property type="taxonomic scope" value="Eukaryota"/>
</dbReference>
<dbReference type="GeneTree" id="ENSGT00390000018390"/>
<dbReference type="HOGENOM" id="CLU_068508_2_1_1"/>
<dbReference type="InParanoid" id="Q9CQ43"/>
<dbReference type="OMA" id="GREFHTQ"/>
<dbReference type="OrthoDB" id="10805at9989"/>
<dbReference type="TreeFam" id="TF105416"/>
<dbReference type="Reactome" id="R-MMU-499943">
    <property type="pathway name" value="Interconversion of nucleotide di- and triphosphates"/>
</dbReference>
<dbReference type="UniPathway" id="UPA00610">
    <property type="reaction ID" value="UER00666"/>
</dbReference>
<dbReference type="BioGRID-ORCS" id="110074">
    <property type="hits" value="28 hits in 78 CRISPR screens"/>
</dbReference>
<dbReference type="ChiTaRS" id="Dut">
    <property type="organism name" value="mouse"/>
</dbReference>
<dbReference type="PRO" id="PR:Q9CQ43"/>
<dbReference type="Proteomes" id="UP000000589">
    <property type="component" value="Chromosome 2"/>
</dbReference>
<dbReference type="Bgee" id="ENSMUSG00000027203">
    <property type="expression patterns" value="Expressed in primitive streak and 248 other cell types or tissues"/>
</dbReference>
<dbReference type="ExpressionAtlas" id="Q9CQ43">
    <property type="expression patterns" value="baseline and differential"/>
</dbReference>
<dbReference type="GO" id="GO:0005739">
    <property type="term" value="C:mitochondrion"/>
    <property type="evidence" value="ECO:0007005"/>
    <property type="project" value="MGI"/>
</dbReference>
<dbReference type="GO" id="GO:0005654">
    <property type="term" value="C:nucleoplasm"/>
    <property type="evidence" value="ECO:0007669"/>
    <property type="project" value="Ensembl"/>
</dbReference>
<dbReference type="GO" id="GO:0005634">
    <property type="term" value="C:nucleus"/>
    <property type="evidence" value="ECO:0000266"/>
    <property type="project" value="MGI"/>
</dbReference>
<dbReference type="GO" id="GO:0004170">
    <property type="term" value="F:dUTP diphosphatase activity"/>
    <property type="evidence" value="ECO:0000266"/>
    <property type="project" value="MGI"/>
</dbReference>
<dbReference type="GO" id="GO:0000287">
    <property type="term" value="F:magnesium ion binding"/>
    <property type="evidence" value="ECO:0007669"/>
    <property type="project" value="InterPro"/>
</dbReference>
<dbReference type="GO" id="GO:0006231">
    <property type="term" value="P:dTMP biosynthetic process"/>
    <property type="evidence" value="ECO:0000266"/>
    <property type="project" value="MGI"/>
</dbReference>
<dbReference type="GO" id="GO:0006226">
    <property type="term" value="P:dUMP biosynthetic process"/>
    <property type="evidence" value="ECO:0007669"/>
    <property type="project" value="UniProtKB-UniPathway"/>
</dbReference>
<dbReference type="GO" id="GO:0046081">
    <property type="term" value="P:dUTP catabolic process"/>
    <property type="evidence" value="ECO:0007669"/>
    <property type="project" value="InterPro"/>
</dbReference>
<dbReference type="CDD" id="cd07557">
    <property type="entry name" value="trimeric_dUTPase"/>
    <property type="match status" value="1"/>
</dbReference>
<dbReference type="FunFam" id="2.70.40.10:FF:000004">
    <property type="entry name" value="Deoxyuridine triphosphatase"/>
    <property type="match status" value="1"/>
</dbReference>
<dbReference type="Gene3D" id="2.70.40.10">
    <property type="match status" value="1"/>
</dbReference>
<dbReference type="InterPro" id="IPR008181">
    <property type="entry name" value="dUTPase"/>
</dbReference>
<dbReference type="InterPro" id="IPR029054">
    <property type="entry name" value="dUTPase-like"/>
</dbReference>
<dbReference type="InterPro" id="IPR036157">
    <property type="entry name" value="dUTPase-like_sf"/>
</dbReference>
<dbReference type="InterPro" id="IPR033704">
    <property type="entry name" value="dUTPase_trimeric"/>
</dbReference>
<dbReference type="NCBIfam" id="TIGR00576">
    <property type="entry name" value="dut"/>
    <property type="match status" value="1"/>
</dbReference>
<dbReference type="NCBIfam" id="NF001862">
    <property type="entry name" value="PRK00601.1"/>
    <property type="match status" value="1"/>
</dbReference>
<dbReference type="PANTHER" id="PTHR11241">
    <property type="entry name" value="DEOXYURIDINE 5'-TRIPHOSPHATE NUCLEOTIDOHYDROLASE"/>
    <property type="match status" value="1"/>
</dbReference>
<dbReference type="PANTHER" id="PTHR11241:SF0">
    <property type="entry name" value="DEOXYURIDINE 5'-TRIPHOSPHATE NUCLEOTIDOHYDROLASE"/>
    <property type="match status" value="1"/>
</dbReference>
<dbReference type="Pfam" id="PF00692">
    <property type="entry name" value="dUTPase"/>
    <property type="match status" value="1"/>
</dbReference>
<dbReference type="SUPFAM" id="SSF51283">
    <property type="entry name" value="dUTPase-like"/>
    <property type="match status" value="1"/>
</dbReference>
<name>DUT_MOUSE</name>
<comment type="function">
    <text evidence="1 2 3">Catalyzes the cleavage of 2'-deoxyuridine 5'-triphosphate (dUTP) into 2'-deoxyuridine 5'-monophosphate (dUMP) and inorganic pyrophosphate and through its action efficiently prevents uracil misincorporation into DNA and at the same time provides dUMP, the substrate for de novo thymidylate biosynthesis (By similarity). Inhibits peroxisome proliferator-activated receptor (PPAR) activity by binding of its N-terminal to PPAR, preventing the latter's dimerization with retinoid X receptor (By similarity). Essential for embryonic development (PubMed:30987342).</text>
</comment>
<comment type="catalytic activity">
    <reaction evidence="1">
        <text>dUTP + H2O = dUMP + diphosphate + H(+)</text>
        <dbReference type="Rhea" id="RHEA:10248"/>
        <dbReference type="ChEBI" id="CHEBI:15377"/>
        <dbReference type="ChEBI" id="CHEBI:15378"/>
        <dbReference type="ChEBI" id="CHEBI:33019"/>
        <dbReference type="ChEBI" id="CHEBI:61555"/>
        <dbReference type="ChEBI" id="CHEBI:246422"/>
        <dbReference type="EC" id="3.6.1.23"/>
    </reaction>
</comment>
<comment type="cofactor">
    <cofactor evidence="1">
        <name>Mg(2+)</name>
        <dbReference type="ChEBI" id="CHEBI:18420"/>
    </cofactor>
</comment>
<comment type="pathway">
    <text evidence="1">Pyrimidine metabolism; dUMP biosynthesis; dUMP from dCTP (dUTP route): step 2/2.</text>
</comment>
<comment type="subunit">
    <text evidence="1">Homotrimer.</text>
</comment>
<comment type="subcellular location">
    <subcellularLocation>
        <location evidence="1">Nucleus</location>
    </subcellularLocation>
</comment>
<comment type="alternative products">
    <event type="alternative splicing"/>
    <isoform>
        <id>Q9CQ43-1</id>
        <name>1</name>
        <sequence type="displayed"/>
    </isoform>
    <isoform>
        <id>Q9CQ43-2</id>
        <name>2</name>
        <sequence type="described" ref="VSP_061339"/>
    </isoform>
</comment>
<comment type="PTM">
    <text evidence="1">Phosphorylated in vivo on Ser-11, a reaction that can be catalyzed in vitro by CDC2.</text>
</comment>
<comment type="disruption phenotype">
    <text evidence="3">Embryos reach the blastocyst stage, however, they die shortly after implantation and analysis of pre-implantation embryos indicates perturbed growth of both inner cell mass and trophectoderm.</text>
</comment>
<comment type="similarity">
    <text evidence="4">Belongs to the dUTPase family.</text>
</comment>
<sequence length="162" mass="17385">MPCSEDAAAVSASKRARAEDGASLRFVRLSEHATAPTRGSARAAGYDLFSAYDYTISPMEKAIVKTDIQIAVPSGCYGRVAPRSGLAVKHFIDVGAGVIDEDYRGNVGVVLFNFGKEKFEVKKGDRIAQLICERISYPDLEEVQTLDDTERGSGGFGSTGKN</sequence>
<accession>Q9CQ43</accession>
<accession>Q8VCG1</accession>
<accession>Q9JJ44</accession>